<feature type="chain" id="PRO_0000086665" description="Serine/threonine-protein kinase SIK2">
    <location>
        <begin position="1"/>
        <end position="798"/>
    </location>
</feature>
<feature type="domain" description="Protein kinase" evidence="4">
    <location>
        <begin position="26"/>
        <end position="277"/>
    </location>
</feature>
<feature type="domain" description="UBA" evidence="5">
    <location>
        <begin position="302"/>
        <end position="342"/>
    </location>
</feature>
<feature type="region of interest" description="Disordered" evidence="7">
    <location>
        <begin position="351"/>
        <end position="382"/>
    </location>
</feature>
<feature type="region of interest" description="Disordered" evidence="7">
    <location>
        <begin position="672"/>
        <end position="691"/>
    </location>
</feature>
<feature type="compositionally biased region" description="Polar residues" evidence="7">
    <location>
        <begin position="351"/>
        <end position="361"/>
    </location>
</feature>
<feature type="compositionally biased region" description="Polar residues" evidence="7">
    <location>
        <begin position="673"/>
        <end position="685"/>
    </location>
</feature>
<feature type="active site" description="Proton acceptor" evidence="2 4 6">
    <location>
        <position position="148"/>
    </location>
</feature>
<feature type="binding site" evidence="2 4">
    <location>
        <begin position="32"/>
        <end position="40"/>
    </location>
    <ligand>
        <name>ATP</name>
        <dbReference type="ChEBI" id="CHEBI:30616"/>
    </ligand>
</feature>
<feature type="binding site" evidence="3 4">
    <location>
        <position position="55"/>
    </location>
    <ligand>
        <name>ATP</name>
        <dbReference type="ChEBI" id="CHEBI:30616"/>
    </ligand>
</feature>
<feature type="modified residue" description="Phosphothreonine" evidence="3">
    <location>
        <position position="181"/>
    </location>
</feature>
<feature type="modified residue" description="Phosphoserine" evidence="1">
    <location>
        <position position="185"/>
    </location>
</feature>
<feature type="modified residue" description="Phosphoserine" evidence="1">
    <location>
        <position position="575"/>
    </location>
</feature>
<comment type="function">
    <text evidence="1 8">Phosphorylates IRS1 in insulin-stimulated adipocytes, potentially modulating the efficiency of insulin signal transduction. Inhibits CREB activity by phosphorylating and repressing the CREB-specific coactivators, CRTC1-3 (By similarity).</text>
</comment>
<comment type="catalytic activity">
    <reaction evidence="8">
        <text>L-seryl-[protein] + ATP = O-phospho-L-seryl-[protein] + ADP + H(+)</text>
        <dbReference type="Rhea" id="RHEA:17989"/>
        <dbReference type="Rhea" id="RHEA-COMP:9863"/>
        <dbReference type="Rhea" id="RHEA-COMP:11604"/>
        <dbReference type="ChEBI" id="CHEBI:15378"/>
        <dbReference type="ChEBI" id="CHEBI:29999"/>
        <dbReference type="ChEBI" id="CHEBI:30616"/>
        <dbReference type="ChEBI" id="CHEBI:83421"/>
        <dbReference type="ChEBI" id="CHEBI:456216"/>
        <dbReference type="EC" id="2.7.11.1"/>
    </reaction>
</comment>
<comment type="catalytic activity">
    <reaction evidence="8">
        <text>L-threonyl-[protein] + ATP = O-phospho-L-threonyl-[protein] + ADP + H(+)</text>
        <dbReference type="Rhea" id="RHEA:46608"/>
        <dbReference type="Rhea" id="RHEA-COMP:11060"/>
        <dbReference type="Rhea" id="RHEA-COMP:11605"/>
        <dbReference type="ChEBI" id="CHEBI:15378"/>
        <dbReference type="ChEBI" id="CHEBI:30013"/>
        <dbReference type="ChEBI" id="CHEBI:30616"/>
        <dbReference type="ChEBI" id="CHEBI:61977"/>
        <dbReference type="ChEBI" id="CHEBI:456216"/>
        <dbReference type="EC" id="2.7.11.1"/>
    </reaction>
</comment>
<comment type="cofactor">
    <cofactor evidence="8">
        <name>Mg(2+)</name>
        <dbReference type="ChEBI" id="CHEBI:18420"/>
    </cofactor>
</comment>
<comment type="activity regulation">
    <text evidence="1">Activated by phosphorylation on Thr-181.</text>
</comment>
<comment type="subcellular location">
    <subcellularLocation>
        <location evidence="8">Cytoplasm</location>
    </subcellularLocation>
</comment>
<comment type="tissue specificity">
    <text evidence="8">Ubiquitously expressed in embryonic tissue.</text>
</comment>
<comment type="PTM">
    <text evidence="1">Phosphorylated at Thr-181 by STK11/LKB1 in complex with STE20-related adapter-alpha (STRADA) pseudo kinase and CAB39.</text>
</comment>
<comment type="similarity">
    <text evidence="9">Belongs to the protein kinase superfamily. CAMK Ser/Thr protein kinase family. SNF1 subfamily.</text>
</comment>
<proteinExistence type="evidence at transcript level"/>
<organism>
    <name type="scientific">Gallus gallus</name>
    <name type="common">Chicken</name>
    <dbReference type="NCBI Taxonomy" id="9031"/>
    <lineage>
        <taxon>Eukaryota</taxon>
        <taxon>Metazoa</taxon>
        <taxon>Chordata</taxon>
        <taxon>Craniata</taxon>
        <taxon>Vertebrata</taxon>
        <taxon>Euteleostomi</taxon>
        <taxon>Archelosauria</taxon>
        <taxon>Archosauria</taxon>
        <taxon>Dinosauria</taxon>
        <taxon>Saurischia</taxon>
        <taxon>Theropoda</taxon>
        <taxon>Coelurosauria</taxon>
        <taxon>Aves</taxon>
        <taxon>Neognathae</taxon>
        <taxon>Galloanserae</taxon>
        <taxon>Galliformes</taxon>
        <taxon>Phasianidae</taxon>
        <taxon>Phasianinae</taxon>
        <taxon>Gallus</taxon>
    </lineage>
</organism>
<name>SIK2_CHICK</name>
<gene>
    <name type="primary">SIK2</name>
    <name type="synonym">QIK</name>
    <name type="synonym">SNF1LK2</name>
</gene>
<protein>
    <recommendedName>
        <fullName>Serine/threonine-protein kinase SIK2</fullName>
        <ecNumber>2.7.11.1</ecNumber>
    </recommendedName>
    <alternativeName>
        <fullName>Qin-induced kinase</fullName>
    </alternativeName>
    <alternativeName>
        <fullName>Salt-inducible kinase 2</fullName>
        <shortName>SIK-2</shortName>
    </alternativeName>
    <alternativeName>
        <fullName>Serine/threonine-protein kinase SNF1-like kinase 2</fullName>
    </alternativeName>
</protein>
<reference evidence="9 10" key="1">
    <citation type="journal article" date="2000" name="Biochem. Biophys. Res. Commun.">
        <title>The new serine-threonine kinase, Qik, is a target of the Qin oncogene.</title>
        <authorList>
            <person name="Xia Y."/>
            <person name="Zhang Z."/>
            <person name="Kruse U."/>
            <person name="Vogt P.K."/>
            <person name="Li J."/>
        </authorList>
    </citation>
    <scope>NUCLEOTIDE SEQUENCE [MRNA]</scope>
    <scope>FUNCTION</scope>
    <scope>SUBCELLULAR LOCATION</scope>
    <scope>TISSUE SPECIFICITY</scope>
</reference>
<accession>Q9IA88</accession>
<keyword id="KW-0067">ATP-binding</keyword>
<keyword id="KW-0963">Cytoplasm</keyword>
<keyword id="KW-0418">Kinase</keyword>
<keyword id="KW-0460">Magnesium</keyword>
<keyword id="KW-0479">Metal-binding</keyword>
<keyword id="KW-0547">Nucleotide-binding</keyword>
<keyword id="KW-0597">Phosphoprotein</keyword>
<keyword id="KW-1185">Reference proteome</keyword>
<keyword id="KW-0723">Serine/threonine-protein kinase</keyword>
<keyword id="KW-0808">Transferase</keyword>
<sequence length="798" mass="88866">MVIMSEDASVPAPSAAQPRPLRVGFYDIERTLGKGNFAVVKLARHRVTKTQVAIKIIDKTRLDPSNLEKIYREVQIMKLLNHPHIIKLYQVMETKDMLYIVTEFAKNGEMFDHLTSNGHLSESEARKKFWQILSAVEYCHSHHIVHRDLKTENLLLDANMNIKLADFGFGNFYKSGEPLSTWCGSPPYAAPEVFEGKEYEGPHLDIWSLGVVLYVLVCGSLPFDGPNLPTLRQRVLEGRFRIPYFMSEDCETLIRRMLVVDPTKRITISQIKQHKWMQADPSLRQQQSLSFSMQNYNSNLGDYNEQVLGIMQTLGIDRQRTVESLQNSSYNHFAAIYYLLLERLKEYRSSQLSSRPATGRQQRPRSSEISNAEMPQDSLTSETLRSSLLYQQPQSLIQPSLQAEMDCDMNNPLQPVFFPVDPNFNGLFRNRSISPSSLLETTISEEVRQEKELEDEIKAYDHPIRIPSNTSRRHTLAEVTTHFYQHAPPCIVISSSASPTEGTSSDSCLTSSSNDSSVALSSCLAGQVMTGSPATARMTSAFLASQSDAPVLQVQGCMGGASLLPVSFQEGRRASDTSLTQGLKAFRQQLRKNARAKGFLGLNKIKGFARQVCQSSSSRAARSAMSPFQHAQPNTCIYSSSGSSREGRNLLEEVLQQQRMLQLQHHQLLQPACPQTSQTSATNGLPPSDSAGTCKASNSLLLSELQRENSFELAFGGNSQLLQPHFFGVSVSPVSSAAHLLDTHLYISSNVSPVGTTFSQQQSFSAQSPSYDAVTLQHGDCEMEDLTSNQLGKFVLVK</sequence>
<dbReference type="EC" id="2.7.11.1"/>
<dbReference type="EMBL" id="AF219232">
    <property type="protein sequence ID" value="AAF28351.1"/>
    <property type="molecule type" value="mRNA"/>
</dbReference>
<dbReference type="PIR" id="JC7500">
    <property type="entry name" value="JC7500"/>
</dbReference>
<dbReference type="RefSeq" id="NP_990013.1">
    <property type="nucleotide sequence ID" value="NM_204682.1"/>
</dbReference>
<dbReference type="SMR" id="Q9IA88"/>
<dbReference type="FunCoup" id="Q9IA88">
    <property type="interactions" value="225"/>
</dbReference>
<dbReference type="STRING" id="9031.ENSGALP00000053588"/>
<dbReference type="PaxDb" id="9031-ENSGALP00000026069"/>
<dbReference type="GeneID" id="395417"/>
<dbReference type="KEGG" id="gga:395417"/>
<dbReference type="CTD" id="150094"/>
<dbReference type="VEuPathDB" id="HostDB:geneid_395417"/>
<dbReference type="eggNOG" id="KOG0586">
    <property type="taxonomic scope" value="Eukaryota"/>
</dbReference>
<dbReference type="InParanoid" id="Q9IA88"/>
<dbReference type="OrthoDB" id="193931at2759"/>
<dbReference type="PhylomeDB" id="Q9IA88"/>
<dbReference type="PRO" id="PR:Q9IA88"/>
<dbReference type="Proteomes" id="UP000000539">
    <property type="component" value="Unassembled WGS sequence"/>
</dbReference>
<dbReference type="GO" id="GO:0005737">
    <property type="term" value="C:cytoplasm"/>
    <property type="evidence" value="ECO:0000314"/>
    <property type="project" value="UniProtKB"/>
</dbReference>
<dbReference type="GO" id="GO:0005524">
    <property type="term" value="F:ATP binding"/>
    <property type="evidence" value="ECO:0000314"/>
    <property type="project" value="UniProtKB"/>
</dbReference>
<dbReference type="GO" id="GO:0000287">
    <property type="term" value="F:magnesium ion binding"/>
    <property type="evidence" value="ECO:0000314"/>
    <property type="project" value="UniProtKB"/>
</dbReference>
<dbReference type="GO" id="GO:0106310">
    <property type="term" value="F:protein serine kinase activity"/>
    <property type="evidence" value="ECO:0007669"/>
    <property type="project" value="RHEA"/>
</dbReference>
<dbReference type="GO" id="GO:0004674">
    <property type="term" value="F:protein serine/threonine kinase activity"/>
    <property type="evidence" value="ECO:0000314"/>
    <property type="project" value="UniProtKB"/>
</dbReference>
<dbReference type="GO" id="GO:0050321">
    <property type="term" value="F:tau-protein kinase activity"/>
    <property type="evidence" value="ECO:0000318"/>
    <property type="project" value="GO_Central"/>
</dbReference>
<dbReference type="GO" id="GO:0035556">
    <property type="term" value="P:intracellular signal transduction"/>
    <property type="evidence" value="ECO:0000314"/>
    <property type="project" value="UniProtKB"/>
</dbReference>
<dbReference type="GO" id="GO:0000226">
    <property type="term" value="P:microtubule cytoskeleton organization"/>
    <property type="evidence" value="ECO:0000318"/>
    <property type="project" value="GO_Central"/>
</dbReference>
<dbReference type="GO" id="GO:0006468">
    <property type="term" value="P:protein phosphorylation"/>
    <property type="evidence" value="ECO:0000314"/>
    <property type="project" value="UniProtKB"/>
</dbReference>
<dbReference type="GO" id="GO:0046626">
    <property type="term" value="P:regulation of insulin receptor signaling pathway"/>
    <property type="evidence" value="ECO:0000250"/>
    <property type="project" value="UniProtKB"/>
</dbReference>
<dbReference type="CDD" id="cd14071">
    <property type="entry name" value="STKc_SIK"/>
    <property type="match status" value="1"/>
</dbReference>
<dbReference type="CDD" id="cd14408">
    <property type="entry name" value="UBA_SIK1"/>
    <property type="match status" value="1"/>
</dbReference>
<dbReference type="FunFam" id="3.30.200.20:FF:000003">
    <property type="entry name" value="Non-specific serine/threonine protein kinase"/>
    <property type="match status" value="1"/>
</dbReference>
<dbReference type="FunFam" id="1.10.510.10:FF:000154">
    <property type="entry name" value="Serine/threonine-protein kinase SIK2"/>
    <property type="match status" value="1"/>
</dbReference>
<dbReference type="Gene3D" id="1.10.510.10">
    <property type="entry name" value="Transferase(Phosphotransferase) domain 1"/>
    <property type="match status" value="1"/>
</dbReference>
<dbReference type="InterPro" id="IPR011009">
    <property type="entry name" value="Kinase-like_dom_sf"/>
</dbReference>
<dbReference type="InterPro" id="IPR000719">
    <property type="entry name" value="Prot_kinase_dom"/>
</dbReference>
<dbReference type="InterPro" id="IPR017441">
    <property type="entry name" value="Protein_kinase_ATP_BS"/>
</dbReference>
<dbReference type="InterPro" id="IPR008271">
    <property type="entry name" value="Ser/Thr_kinase_AS"/>
</dbReference>
<dbReference type="InterPro" id="IPR017090">
    <property type="entry name" value="Ser/Thr_kinase_SIK1/2"/>
</dbReference>
<dbReference type="InterPro" id="IPR034672">
    <property type="entry name" value="SIK"/>
</dbReference>
<dbReference type="InterPro" id="IPR015940">
    <property type="entry name" value="UBA"/>
</dbReference>
<dbReference type="PANTHER" id="PTHR24346">
    <property type="entry name" value="MAP/MICROTUBULE AFFINITY-REGULATING KINASE"/>
    <property type="match status" value="1"/>
</dbReference>
<dbReference type="PANTHER" id="PTHR24346:SF47">
    <property type="entry name" value="SERINE_THREONINE-PROTEIN KINASE SIK2-RELATED"/>
    <property type="match status" value="1"/>
</dbReference>
<dbReference type="Pfam" id="PF00069">
    <property type="entry name" value="Pkinase"/>
    <property type="match status" value="1"/>
</dbReference>
<dbReference type="Pfam" id="PF23312">
    <property type="entry name" value="UBA_SIK3"/>
    <property type="match status" value="1"/>
</dbReference>
<dbReference type="PIRSF" id="PIRSF037014">
    <property type="entry name" value="Ser/Thr_PK_SNF1-like"/>
    <property type="match status" value="1"/>
</dbReference>
<dbReference type="SMART" id="SM00220">
    <property type="entry name" value="S_TKc"/>
    <property type="match status" value="1"/>
</dbReference>
<dbReference type="SUPFAM" id="SSF56112">
    <property type="entry name" value="Protein kinase-like (PK-like)"/>
    <property type="match status" value="1"/>
</dbReference>
<dbReference type="PROSITE" id="PS00107">
    <property type="entry name" value="PROTEIN_KINASE_ATP"/>
    <property type="match status" value="1"/>
</dbReference>
<dbReference type="PROSITE" id="PS50011">
    <property type="entry name" value="PROTEIN_KINASE_DOM"/>
    <property type="match status" value="1"/>
</dbReference>
<dbReference type="PROSITE" id="PS00108">
    <property type="entry name" value="PROTEIN_KINASE_ST"/>
    <property type="match status" value="1"/>
</dbReference>
<dbReference type="PROSITE" id="PS50030">
    <property type="entry name" value="UBA"/>
    <property type="match status" value="1"/>
</dbReference>
<evidence type="ECO:0000250" key="1"/>
<evidence type="ECO:0000250" key="2">
    <source>
        <dbReference type="UniProtKB" id="Q13131"/>
    </source>
</evidence>
<evidence type="ECO:0000250" key="3">
    <source>
        <dbReference type="UniProtKB" id="Q9H0K1"/>
    </source>
</evidence>
<evidence type="ECO:0000255" key="4">
    <source>
        <dbReference type="PROSITE-ProRule" id="PRU00159"/>
    </source>
</evidence>
<evidence type="ECO:0000255" key="5">
    <source>
        <dbReference type="PROSITE-ProRule" id="PRU00212"/>
    </source>
</evidence>
<evidence type="ECO:0000255" key="6">
    <source>
        <dbReference type="PROSITE-ProRule" id="PRU10027"/>
    </source>
</evidence>
<evidence type="ECO:0000256" key="7">
    <source>
        <dbReference type="SAM" id="MobiDB-lite"/>
    </source>
</evidence>
<evidence type="ECO:0000269" key="8">
    <source>
    </source>
</evidence>
<evidence type="ECO:0000305" key="9"/>
<evidence type="ECO:0000312" key="10">
    <source>
        <dbReference type="EMBL" id="AAF28351.1"/>
    </source>
</evidence>